<reference key="1">
    <citation type="journal article" date="1996" name="Nucleic Acids Res.">
        <title>The complete nucleotide sequence of bacteriophage HP1 DNA.</title>
        <authorList>
            <person name="Esposito D."/>
            <person name="Fitzmaurice W.P."/>
            <person name="Benjamin R.C."/>
            <person name="Goodman S.D."/>
            <person name="Waldman A.S."/>
            <person name="Scocca J.J."/>
        </authorList>
    </citation>
    <scope>NUCLEOTIDE SEQUENCE [LARGE SCALE GENOMIC DNA]</scope>
</reference>
<organismHost>
    <name type="scientific">Haemophilus influenzae</name>
    <dbReference type="NCBI Taxonomy" id="727"/>
</organismHost>
<keyword id="KW-1185">Reference proteome</keyword>
<name>YO35_BPHC1</name>
<feature type="chain" id="PRO_0000165344" description="Uncharacterized 58.7 kDa protein in lys 3'region">
    <location>
        <begin position="1"/>
        <end position="533"/>
    </location>
</feature>
<proteinExistence type="predicted"/>
<dbReference type="EMBL" id="U24159">
    <property type="protein sequence ID" value="AAB09222.1"/>
    <property type="molecule type" value="Genomic_DNA"/>
</dbReference>
<dbReference type="PIR" id="S69543">
    <property type="entry name" value="S69543"/>
</dbReference>
<dbReference type="RefSeq" id="NP_043506.1">
    <property type="nucleotide sequence ID" value="NC_001697.1"/>
</dbReference>
<dbReference type="GeneID" id="1261148"/>
<dbReference type="KEGG" id="vg:1261148"/>
<dbReference type="Proteomes" id="UP000001713">
    <property type="component" value="Segment"/>
</dbReference>
<dbReference type="SUPFAM" id="SSF69255">
    <property type="entry name" value="gp5 N-terminal domain-like"/>
    <property type="match status" value="1"/>
</dbReference>
<dbReference type="SUPFAM" id="SSF69349">
    <property type="entry name" value="Phage fibre proteins"/>
    <property type="match status" value="1"/>
</dbReference>
<sequence>MKIIKTCLIDGEELELADEMIILELNNTGRGFVTVRTEKDCIGKSAVFEMGEYDHYYKWFDGIVEREQSAENGYKKLFIREKVAVFEKPLNCSHRHITLRDLCAWITSQTKIPVKVPQADYADTPISLFTHNGSGYQLLANIGRQYQIADYMWQQSPDGSLFVGSHKDSRWAGKNIEFDESMTLTSGSNDMTIPITAAIRPGAIINGNKIQKVELSGDDYVLSRENLGKDGKPEQKSPERRQMEKTFPELAGGYHLPKYAKVVGIADPSSGGDISDPFRPKYAVELQLLDENGNEDKTVPVYPAAPLPVTSTGSQGGDFAFPEVGTMVEVGFAYGRSDQPFVRTMLAQGKTVPSVAPGEQLKQQRPEVFERTDAAGNKIRETDQKITDKSFERHIETDSEVKQIGTSNVAIDSDKTETIGGNKTVSVLGSINDMTASNRTVGTGGTLQEKIVGLAQRVSDEKNKFVAPLSYMGTEAQNIFRLLEDTIQLLGEVASTLATHTHRGSPPPDQASTFNQQANKAKTIKGKLTPIIE</sequence>
<organism>
    <name type="scientific">Haemophilus phage HP1 (strain HP1c1)</name>
    <name type="common">Bacteriophage HP1</name>
    <dbReference type="NCBI Taxonomy" id="1289570"/>
    <lineage>
        <taxon>Viruses</taxon>
        <taxon>Duplodnaviria</taxon>
        <taxon>Heunggongvirae</taxon>
        <taxon>Uroviricota</taxon>
        <taxon>Caudoviricetes</taxon>
        <taxon>Peduoviridae</taxon>
        <taxon>Hpunavirus</taxon>
        <taxon>Haemophilus phage HP1</taxon>
    </lineage>
</organism>
<accession>P51739</accession>
<protein>
    <recommendedName>
        <fullName>Uncharacterized 58.7 kDa protein in lys 3'region</fullName>
    </recommendedName>
    <alternativeName>
        <fullName>ORF35</fullName>
    </alternativeName>
</protein>